<proteinExistence type="evidence at protein level"/>
<gene>
    <name type="primary">G</name>
</gene>
<evidence type="ECO:0000250" key="1"/>
<evidence type="ECO:0000250" key="2">
    <source>
        <dbReference type="UniProtKB" id="P08667"/>
    </source>
</evidence>
<evidence type="ECO:0000255" key="3"/>
<evidence type="ECO:0000256" key="4">
    <source>
        <dbReference type="SAM" id="MobiDB-lite"/>
    </source>
</evidence>
<evidence type="ECO:0000305" key="5"/>
<comment type="function">
    <text evidence="1 2">Attaches the virus to host cellular receptor, inducing endocytosis of the virion by using different host proteins including TFRC, GRM2 and ITGB1 (By similarity). In the endosome, the acidic pH induces conformational changes in the glycoprotein trimer, which trigger fusion between virus and cell membrane. There is convincing in vitro evidence that the muscular form of the nicotinic acetylcholine receptor (nAChR), the neuronal cell adhesion molecule (NCAM), and the p75 neurotrophin receptor (p75NTR) bind glycoprotein and thereby facilitate rabies virus entry into cells (By similarity).</text>
</comment>
<comment type="subunit">
    <text evidence="1 2">Homotrimer (By similarity). Interacts with matrix protein (By similarity). Interacts with host TRFC. Interacts with host BST2; this interaction inhibits viral budding by tethering new virions to the cell surface. Interacts with ITGB1. Interacts with host GRM2 (By similarity).</text>
</comment>
<comment type="subcellular location">
    <subcellularLocation>
        <location evidence="5">Virion membrane</location>
        <topology evidence="5">Single-pass type I membrane protein</topology>
    </subcellularLocation>
</comment>
<comment type="PTM">
    <text evidence="1">Glycosylated and palmitoylated by host. Glycosylation is crucial for glycoprotein export at the cell surface (By similarity).</text>
</comment>
<comment type="biotechnology">
    <text>Primary surface antigen capable of inducing and reacting with virus-neutralizing antibodies. Almost all human and veterinary vaccines are based on the functional aspects of the G protein.</text>
</comment>
<comment type="miscellaneous">
    <text evidence="1">Arg-352 is highly involved in rabies virus pathogenicity. Its mutation dramatically attenuates the virus (By similarity).</text>
</comment>
<comment type="similarity">
    <text evidence="5">Belongs to the lyssavirus glycoprotein family.</text>
</comment>
<organism>
    <name type="scientific">Rabies virus (isolate Human/Algeria/1991)</name>
    <name type="common">RABV</name>
    <dbReference type="NCBI Taxonomy" id="31613"/>
    <lineage>
        <taxon>Viruses</taxon>
        <taxon>Riboviria</taxon>
        <taxon>Orthornavirae</taxon>
        <taxon>Negarnaviricota</taxon>
        <taxon>Haploviricotina</taxon>
        <taxon>Monjiviricetes</taxon>
        <taxon>Mononegavirales</taxon>
        <taxon>Rhabdoviridae</taxon>
        <taxon>Alpharhabdovirinae</taxon>
        <taxon>Lyssavirus</taxon>
        <taxon>Lyssavirus rabies</taxon>
    </lineage>
</organism>
<dbReference type="EMBL" id="M81059">
    <property type="protein sequence ID" value="AAA47210.1"/>
    <property type="molecule type" value="Genomic_RNA"/>
</dbReference>
<dbReference type="SMR" id="P32550"/>
<dbReference type="GlyCosmos" id="P32550">
    <property type="glycosylation" value="3 sites, No reported glycans"/>
</dbReference>
<dbReference type="GO" id="GO:0016020">
    <property type="term" value="C:membrane"/>
    <property type="evidence" value="ECO:0007669"/>
    <property type="project" value="UniProtKB-KW"/>
</dbReference>
<dbReference type="GO" id="GO:0019031">
    <property type="term" value="C:viral envelope"/>
    <property type="evidence" value="ECO:0007669"/>
    <property type="project" value="UniProtKB-KW"/>
</dbReference>
<dbReference type="GO" id="GO:0036338">
    <property type="term" value="C:viral membrane"/>
    <property type="evidence" value="ECO:0000250"/>
    <property type="project" value="UniProtKB"/>
</dbReference>
<dbReference type="GO" id="GO:0055036">
    <property type="term" value="C:virion membrane"/>
    <property type="evidence" value="ECO:0007669"/>
    <property type="project" value="UniProtKB-SubCell"/>
</dbReference>
<dbReference type="GO" id="GO:0098670">
    <property type="term" value="P:entry receptor-mediated virion attachment to host cell"/>
    <property type="evidence" value="ECO:0000250"/>
    <property type="project" value="UniProtKB"/>
</dbReference>
<dbReference type="GO" id="GO:0039654">
    <property type="term" value="P:fusion of virus membrane with host endosome membrane"/>
    <property type="evidence" value="ECO:0000250"/>
    <property type="project" value="UniProtKB"/>
</dbReference>
<dbReference type="Gene3D" id="2.30.29.130">
    <property type="match status" value="1"/>
</dbReference>
<dbReference type="InterPro" id="IPR055448">
    <property type="entry name" value="PH_Rhabdo_glycop"/>
</dbReference>
<dbReference type="InterPro" id="IPR055447">
    <property type="entry name" value="Rhabdo_glycop_CD"/>
</dbReference>
<dbReference type="InterPro" id="IPR001903">
    <property type="entry name" value="Rhabdo_glycop_FD"/>
</dbReference>
<dbReference type="Pfam" id="PF24834">
    <property type="entry name" value="PH_Rhabdo_glycop"/>
    <property type="match status" value="1"/>
</dbReference>
<dbReference type="Pfam" id="PF24833">
    <property type="entry name" value="Rhabdo_glycop_CD"/>
    <property type="match status" value="1"/>
</dbReference>
<dbReference type="Pfam" id="PF00974">
    <property type="entry name" value="Rhabdo_glycop_FD"/>
    <property type="match status" value="1"/>
</dbReference>
<dbReference type="SUPFAM" id="SSF161008">
    <property type="entry name" value="Viral glycoprotein ectodomain-like"/>
    <property type="match status" value="1"/>
</dbReference>
<accession>P32550</accession>
<keyword id="KW-1015">Disulfide bond</keyword>
<keyword id="KW-0325">Glycoprotein</keyword>
<keyword id="KW-0449">Lipoprotein</keyword>
<keyword id="KW-0472">Membrane</keyword>
<keyword id="KW-0564">Palmitate</keyword>
<keyword id="KW-0732">Signal</keyword>
<keyword id="KW-0812">Transmembrane</keyword>
<keyword id="KW-1133">Transmembrane helix</keyword>
<keyword id="KW-0261">Viral envelope protein</keyword>
<keyword id="KW-0946">Virion</keyword>
<name>GLYCO_RABVT</name>
<reference key="1">
    <citation type="journal article" date="1992" name="Virology">
        <title>Rapid sequence evolution of street rabies glycoprotein is related to the highly heterogeneous nature of the viral population.</title>
        <authorList>
            <person name="Benmansour A."/>
            <person name="Brahimi M."/>
            <person name="Tuffereau C."/>
            <person name="Coulon P."/>
            <person name="Lafay F."/>
            <person name="Flamand A."/>
        </authorList>
    </citation>
    <scope>NUCLEOTIDE SEQUENCE [GENOMIC RNA]</scope>
</reference>
<organismHost>
    <name type="scientific">Homo sapiens</name>
    <name type="common">Human</name>
    <dbReference type="NCBI Taxonomy" id="9606"/>
</organismHost>
<organismHost>
    <name type="scientific">Mammalia</name>
    <dbReference type="NCBI Taxonomy" id="40674"/>
</organismHost>
<protein>
    <recommendedName>
        <fullName>Glycoprotein</fullName>
    </recommendedName>
</protein>
<feature type="signal peptide">
    <location>
        <begin position="1"/>
        <end position="19"/>
    </location>
</feature>
<feature type="chain" id="PRO_0000040997" description="Glycoprotein">
    <location>
        <begin position="20"/>
        <end position="524"/>
    </location>
</feature>
<feature type="topological domain" description="Virion surface" evidence="3">
    <location>
        <begin position="20"/>
        <end position="459"/>
    </location>
</feature>
<feature type="transmembrane region" description="Helical" evidence="3">
    <location>
        <begin position="460"/>
        <end position="480"/>
    </location>
</feature>
<feature type="topological domain" description="Intravirion" evidence="3">
    <location>
        <begin position="481"/>
        <end position="524"/>
    </location>
</feature>
<feature type="region of interest" description="Disordered" evidence="4">
    <location>
        <begin position="487"/>
        <end position="509"/>
    </location>
</feature>
<feature type="compositionally biased region" description="Basic and acidic residues" evidence="4">
    <location>
        <begin position="487"/>
        <end position="498"/>
    </location>
</feature>
<feature type="lipid moiety-binding region" description="S-palmitoyl cysteine; by host" evidence="1">
    <location>
        <position position="480"/>
    </location>
</feature>
<feature type="glycosylation site" description="N-linked (GlcNAc...) asparagine; by host" evidence="1">
    <location>
        <position position="56"/>
    </location>
</feature>
<feature type="glycosylation site" description="N-linked (GlcNAc...) asparagine; by host" evidence="3">
    <location>
        <position position="177"/>
    </location>
</feature>
<feature type="glycosylation site" description="N-linked (GlcNAc...) asparagine; by host" evidence="1">
    <location>
        <position position="338"/>
    </location>
</feature>
<feature type="disulfide bond" evidence="2">
    <location>
        <begin position="43"/>
        <end position="302"/>
    </location>
</feature>
<feature type="disulfide bond" evidence="2">
    <location>
        <begin position="54"/>
        <end position="226"/>
    </location>
</feature>
<feature type="disulfide bond" evidence="2">
    <location>
        <begin position="80"/>
        <end position="113"/>
    </location>
</feature>
<feature type="disulfide bond" evidence="2">
    <location>
        <begin position="178"/>
        <end position="188"/>
    </location>
</feature>
<feature type="disulfide bond" evidence="2">
    <location>
        <begin position="208"/>
        <end position="247"/>
    </location>
</feature>
<feature type="disulfide bond" evidence="2">
    <location>
        <begin position="242"/>
        <end position="271"/>
    </location>
</feature>
<feature type="disulfide bond" evidence="2">
    <location>
        <begin position="363"/>
        <end position="370"/>
    </location>
</feature>
<sequence length="524" mass="58723">MVPQALLFVPLLVFPLCFGKFPIYTIPDKLGPWSPIDIHHLRCPNNLVVEDEGCTNLSGFSYMELKVGYISAIKVNGFTCTGVVTEAETYTNFVGYVTTTFKRKHFRPTPDACRAAYNWKMAGDPRYEESLHNPYPDYHWLRTVKTTKESLVIISPSVADLDPYDKSLHSRVFPSGNCSGITVSSTYCSTNHDYTIWMPENPRLETSCDIFTNSRGKRASKGSKTCGFVDERGLYKSLKGACKLKLCGVLGLRLMDGTWVAMQTSDETKWCPPDQLVNLHDFRSDEIEHLVVEELVKKREECLDALESIMTTKSVSLRRLSHLRKLVPGFGKAYTIFNKTLMEAEAHYKSVQTWNEIIPSKGCLRVGGRCHPHVNGVFFNGIILGPDGHVLIPEMQSSLLQQHMELLESSVIPLMHPLADPSTVFKDGDEAEDFVEVHLPDVHKQVSGVDLGLPNWGKYVLLSAGTLIALMLIIFLMTCCRRVNRPKSTERSLGETGRKVSVTSQSGKVISSWESYKSGGETRR</sequence>